<accession>Q53U20</accession>
<accession>Q6F6I2</accession>
<sequence length="424" mass="44788">MVSPLAVKGGEALRTRPWPAWPQPAPGVPAAVAEVLGSGRWSISGPYRGTDSHERRFARAFADYHGVPYCVPAASGTAGLMLALEACGVGAGDEVIVPGLSWVASGSTVLGVNAVPVFCDVDPDTLCVSPEAVEALITERTRAVVVVHLYSAVADMDGLTRVAERHGLPLVEDCAQAHGASYRGVKVGALATAGTFSMQHSKVLTSGEGGAVITRDADLARRVEHLRADGRCLSDGPPAPGAMELVETGELMGSNRCLSEFQAAILTEQLTLLDEQNRTRRANAARLDGLLGELGLRPQATSEGTTSRTYYTYAARLPEGALEDVPLTDVTGALTAELGFPVQPCYAPIPANRLYAPQTRRRYTLGPDHEARIDPKRFALPVCEDTARRTVTLHHAALLGDAEDMADIAAAFAKVLRHGADLAT</sequence>
<comment type="function">
    <text evidence="4">Catalyzes the PLP-dependent transamination of 2-deoxy-scyllo-inosose (2-DOI) to form 2-deoxy-scyllo-inosamine (2-DOIA) using L-glutamine as the amino donor. Also catalyzes the transamination of 3-amino-2,3-dideoxy-scyllo-inosose (keto-2-DOIA) into 2-deoxystreptamine (2-DOS).</text>
</comment>
<comment type="catalytic activity">
    <reaction evidence="2">
        <text>2-deoxy-L-scyllo-inosose + L-glutamine = 2-deoxy-scyllo-inosamine + 2-oxoglutaramate</text>
        <dbReference type="Rhea" id="RHEA:34147"/>
        <dbReference type="ChEBI" id="CHEBI:16769"/>
        <dbReference type="ChEBI" id="CHEBI:58359"/>
        <dbReference type="ChEBI" id="CHEBI:64796"/>
        <dbReference type="ChEBI" id="CHEBI:65003"/>
        <dbReference type="EC" id="2.6.1.100"/>
    </reaction>
</comment>
<comment type="catalytic activity">
    <reaction evidence="2">
        <text>3-amino-2,3-dideoxy-scyllo-inosose + L-glutamine = 2-deoxystreptamine + 2-oxoglutaramate</text>
        <dbReference type="Rhea" id="RHEA:34151"/>
        <dbReference type="ChEBI" id="CHEBI:16769"/>
        <dbReference type="ChEBI" id="CHEBI:58359"/>
        <dbReference type="ChEBI" id="CHEBI:65002"/>
        <dbReference type="ChEBI" id="CHEBI:65069"/>
        <dbReference type="EC" id="2.6.1.101"/>
    </reaction>
</comment>
<comment type="cofactor">
    <cofactor evidence="3">
        <name>pyridoxal 5'-phosphate</name>
        <dbReference type="ChEBI" id="CHEBI:597326"/>
    </cofactor>
</comment>
<comment type="pathway">
    <text>Metabolic intermediate biosynthesis; 2-deoxystreptamine biosynthesis; 2-deoxystreptamine from D-glucose 6-phosphate: step 2/4.</text>
</comment>
<comment type="pathway">
    <text>Metabolic intermediate biosynthesis; 2-deoxystreptamine biosynthesis; 2-deoxystreptamine from D-glucose 6-phosphate: step 4/4.</text>
</comment>
<comment type="pathway">
    <text>Antibiotic biosynthesis; neomycin biosynthesis.</text>
</comment>
<comment type="similarity">
    <text evidence="5">Belongs to the DegT/DnrJ/EryC1 family. L-glutamine:2-deoxy-scyllo-inosose/scyllo-inosose aminotransferase subfamily.</text>
</comment>
<gene>
    <name type="primary">neoB</name>
    <name type="synonym">nemB</name>
    <name type="synonym">neo6</name>
    <name type="synonym">neoS</name>
    <name type="synonym">nmcS</name>
</gene>
<proteinExistence type="evidence at protein level"/>
<name>GLDSA_STRFR</name>
<feature type="chain" id="PRO_0000233015" description="L-glutamine:2-deoxy-scyllo-inosose aminotransferase">
    <location>
        <begin position="1"/>
        <end position="424"/>
    </location>
</feature>
<feature type="modified residue" description="N6-(pyridoxal phosphate)lysine" evidence="1">
    <location>
        <position position="202"/>
    </location>
</feature>
<organism>
    <name type="scientific">Streptomyces fradiae</name>
    <name type="common">Streptomyces roseoflavus</name>
    <dbReference type="NCBI Taxonomy" id="1906"/>
    <lineage>
        <taxon>Bacteria</taxon>
        <taxon>Bacillati</taxon>
        <taxon>Actinomycetota</taxon>
        <taxon>Actinomycetes</taxon>
        <taxon>Kitasatosporales</taxon>
        <taxon>Streptomycetaceae</taxon>
        <taxon>Streptomyces</taxon>
    </lineage>
</organism>
<keyword id="KW-0032">Aminotransferase</keyword>
<keyword id="KW-0045">Antibiotic biosynthesis</keyword>
<keyword id="KW-0663">Pyridoxal phosphate</keyword>
<keyword id="KW-0808">Transferase</keyword>
<evidence type="ECO:0000250" key="1"/>
<evidence type="ECO:0000250" key="2">
    <source>
        <dbReference type="UniProtKB" id="Q6L739"/>
    </source>
</evidence>
<evidence type="ECO:0000269" key="3">
    <source>
    </source>
</evidence>
<evidence type="ECO:0000269" key="4">
    <source>
    </source>
</evidence>
<evidence type="ECO:0000305" key="5"/>
<protein>
    <recommendedName>
        <fullName>L-glutamine:2-deoxy-scyllo-inosose aminotransferase</fullName>
        <shortName>L-glutamine:DOI aminotransferase</shortName>
        <ecNumber evidence="2">2.6.1.100</ecNumber>
    </recommendedName>
    <alternativeName>
        <fullName>Bifunctional L-glutamine:ketocyclitol aminotransferase I/II</fullName>
    </alternativeName>
    <alternativeName>
        <fullName>L-glutamine:3-amino-2,3-dideoxy-scyllo-inosose aminotransferase</fullName>
        <shortName>L-glutamine:amino-DOI aminotransferase</shortName>
        <ecNumber evidence="2">2.6.1.101</ecNumber>
    </alternativeName>
</protein>
<reference key="1">
    <citation type="submission" date="2004-02" db="EMBL/GenBank/DDBJ databases">
        <title>Analysis and comparison of biosynthetic gene clusters for the 2-deoxy-inosamine containing aminoglycoside antibiotics ribostamycin, neomycin, lividomycin, paromomycin and butirosin.</title>
        <authorList>
            <person name="Aboshanab K.M.A."/>
            <person name="Schmidt-Beissner H."/>
            <person name="Wehmeier U.F."/>
            <person name="Piepersberg W."/>
            <person name="Welzel K."/>
            <person name="Vente A."/>
        </authorList>
    </citation>
    <scope>NUCLEOTIDE SEQUENCE [GENOMIC DNA]</scope>
    <source>
        <strain>ATCC 10745 / CBS 498.68 / DSM 40063 / JCM 4133 / NBRC 12773 / NCIMB 8233 / NRRL B-1195 / VKM Ac-150</strain>
    </source>
</reference>
<reference key="2">
    <citation type="submission" date="2004-07" db="EMBL/GenBank/DDBJ databases">
        <title>Cloning and characterization of a neomycin biosynthetic gene cluster from Streptomyces fradiae, ATCC 10745.</title>
        <authorList>
            <person name="Subba B."/>
            <person name="Kharel M.K."/>
            <person name="Sthapit B."/>
            <person name="Liou K."/>
            <person name="Lee H.C."/>
            <person name="Woo J.S."/>
            <person name="Sohng J.K."/>
        </authorList>
    </citation>
    <scope>NUCLEOTIDE SEQUENCE [GENOMIC DNA]</scope>
    <source>
        <strain>ATCC 10745 / CBS 498.68 / DSM 40063 / JCM 4133 / NBRC 12773 / NCIMB 8233 / NRRL B-1195 / VKM Ac-150</strain>
    </source>
</reference>
<reference key="3">
    <citation type="journal article" date="2005" name="J. Antibiot.">
        <title>Biosynthesis of 2-deoxystreptamine by three crucial enzymes in Streptomyces fradiae NBRC 12773.</title>
        <authorList>
            <person name="Kudo F."/>
            <person name="Yamamoto Y."/>
            <person name="Yokoyama K."/>
            <person name="Eguchi T."/>
            <person name="Kakinuma K."/>
        </authorList>
    </citation>
    <scope>NUCLEOTIDE SEQUENCE [GENOMIC DNA]</scope>
    <scope>FUNCTION</scope>
    <source>
        <strain>ATCC 10745 / CBS 498.68 / DSM 40063 / JCM 4133 / NBRC 12773 / NCIMB 8233 / NRRL B-1195 / VKM Ac-150</strain>
    </source>
</reference>
<reference key="4">
    <citation type="journal article" date="2005" name="Org. Biomol. Chem.">
        <title>The neomycin biosynthetic gene cluster of Streptomyces fradiae NCIMB 8233: characterisation of an aminotransferase involved in the formation of 2-deoxystreptamine.</title>
        <authorList>
            <person name="Huang F."/>
            <person name="Haydock S.F."/>
            <person name="Mironenko T."/>
            <person name="Spiteller D."/>
            <person name="Li Y."/>
            <person name="Spencer J.B."/>
        </authorList>
    </citation>
    <scope>NUCLEOTIDE SEQUENCE [GENOMIC DNA]</scope>
    <scope>CHARACTERIZATION</scope>
    <scope>COFACTOR</scope>
    <source>
        <strain>ATCC 10745 / CBS 498.68 / DSM 40063 / JCM 4133 / NBRC 12773 / NCIMB 8233 / NRRL B-1195 / VKM Ac-150</strain>
    </source>
</reference>
<reference key="5">
    <citation type="journal article" date="2002" name="J. Antibiot.">
        <title>First identification of Streptomyces genes involved in the biosynthesis of 2-deoxystreptamine-containing aminoglycoside antibiotics. Genetic and evolutionary analysis of L-glutamine:2-deoxy-scyllo-inosose aminotransferase genes.</title>
        <authorList>
            <person name="Tamegai H."/>
            <person name="Eguchi T."/>
            <person name="Kakinuma K."/>
        </authorList>
    </citation>
    <scope>NUCLEOTIDE SEQUENCE [GENOMIC DNA] OF 101-257</scope>
    <source>
        <strain>ATCC 10745 / CBS 498.68 / DSM 40063 / JCM 4133 / NBRC 12773 / NCIMB 8233 / NRRL B-1195 / VKM Ac-150</strain>
        <strain>ATCC 21096 / DSM 40943 / NBRC 13147 / MA-2898 / NRRL B-3357</strain>
    </source>
</reference>
<dbReference type="EC" id="2.6.1.100" evidence="2"/>
<dbReference type="EC" id="2.6.1.101" evidence="2"/>
<dbReference type="EMBL" id="AJ629247">
    <property type="protein sequence ID" value="CAF33311.1"/>
    <property type="molecule type" value="Genomic_DNA"/>
</dbReference>
<dbReference type="EMBL" id="AJ786317">
    <property type="protein sequence ID" value="CAH05102.1"/>
    <property type="molecule type" value="Genomic_DNA"/>
</dbReference>
<dbReference type="EMBL" id="AB211959">
    <property type="protein sequence ID" value="BAD95819.1"/>
    <property type="molecule type" value="Genomic_DNA"/>
</dbReference>
<dbReference type="EMBL" id="AJ843080">
    <property type="protein sequence ID" value="CAH58689.1"/>
    <property type="molecule type" value="Genomic_DNA"/>
</dbReference>
<dbReference type="EMBL" id="AB066368">
    <property type="protein sequence ID" value="BAD30055.1"/>
    <property type="molecule type" value="Genomic_DNA"/>
</dbReference>
<dbReference type="EMBL" id="AB066369">
    <property type="protein sequence ID" value="BAD30056.1"/>
    <property type="molecule type" value="Genomic_DNA"/>
</dbReference>
<dbReference type="RefSeq" id="WP_031129624.1">
    <property type="nucleotide sequence ID" value="NZ_JBIWOL010000003.1"/>
</dbReference>
<dbReference type="SMR" id="Q53U20"/>
<dbReference type="KEGG" id="ag:BAD95819"/>
<dbReference type="BioCyc" id="MetaCyc:MONOMER-17227"/>
<dbReference type="BRENDA" id="2.6.1.100">
    <property type="organism ID" value="5932"/>
</dbReference>
<dbReference type="BRENDA" id="2.6.1.101">
    <property type="organism ID" value="5932"/>
</dbReference>
<dbReference type="BRENDA" id="2.6.1.50">
    <property type="organism ID" value="5932"/>
</dbReference>
<dbReference type="UniPathway" id="UPA00907">
    <property type="reaction ID" value="UER00922"/>
</dbReference>
<dbReference type="UniPathway" id="UPA00907">
    <property type="reaction ID" value="UER00924"/>
</dbReference>
<dbReference type="UniPathway" id="UPA00969"/>
<dbReference type="GO" id="GO:0030170">
    <property type="term" value="F:pyridoxal phosphate binding"/>
    <property type="evidence" value="ECO:0007669"/>
    <property type="project" value="TreeGrafter"/>
</dbReference>
<dbReference type="GO" id="GO:0008483">
    <property type="term" value="F:transaminase activity"/>
    <property type="evidence" value="ECO:0007669"/>
    <property type="project" value="UniProtKB-KW"/>
</dbReference>
<dbReference type="GO" id="GO:0017000">
    <property type="term" value="P:antibiotic biosynthetic process"/>
    <property type="evidence" value="ECO:0007669"/>
    <property type="project" value="UniProtKB-KW"/>
</dbReference>
<dbReference type="GO" id="GO:0000271">
    <property type="term" value="P:polysaccharide biosynthetic process"/>
    <property type="evidence" value="ECO:0007669"/>
    <property type="project" value="TreeGrafter"/>
</dbReference>
<dbReference type="CDD" id="cd00616">
    <property type="entry name" value="AHBA_syn"/>
    <property type="match status" value="1"/>
</dbReference>
<dbReference type="Gene3D" id="3.90.1150.10">
    <property type="entry name" value="Aspartate Aminotransferase, domain 1"/>
    <property type="match status" value="1"/>
</dbReference>
<dbReference type="Gene3D" id="3.40.640.10">
    <property type="entry name" value="Type I PLP-dependent aspartate aminotransferase-like (Major domain)"/>
    <property type="match status" value="1"/>
</dbReference>
<dbReference type="InterPro" id="IPR000653">
    <property type="entry name" value="DegT/StrS_aminotransferase"/>
</dbReference>
<dbReference type="InterPro" id="IPR015424">
    <property type="entry name" value="PyrdxlP-dep_Trfase"/>
</dbReference>
<dbReference type="InterPro" id="IPR015421">
    <property type="entry name" value="PyrdxlP-dep_Trfase_major"/>
</dbReference>
<dbReference type="InterPro" id="IPR015422">
    <property type="entry name" value="PyrdxlP-dep_Trfase_small"/>
</dbReference>
<dbReference type="PANTHER" id="PTHR30244:SF34">
    <property type="entry name" value="DTDP-4-AMINO-4,6-DIDEOXYGALACTOSE TRANSAMINASE"/>
    <property type="match status" value="1"/>
</dbReference>
<dbReference type="PANTHER" id="PTHR30244">
    <property type="entry name" value="TRANSAMINASE"/>
    <property type="match status" value="1"/>
</dbReference>
<dbReference type="Pfam" id="PF01041">
    <property type="entry name" value="DegT_DnrJ_EryC1"/>
    <property type="match status" value="1"/>
</dbReference>
<dbReference type="PIRSF" id="PIRSF000390">
    <property type="entry name" value="PLP_StrS"/>
    <property type="match status" value="1"/>
</dbReference>
<dbReference type="SUPFAM" id="SSF53383">
    <property type="entry name" value="PLP-dependent transferases"/>
    <property type="match status" value="1"/>
</dbReference>